<name>RECU_STRPZ</name>
<proteinExistence type="inferred from homology"/>
<feature type="chain" id="PRO_1000095683" description="Holliday junction resolvase RecU">
    <location>
        <begin position="1"/>
        <end position="202"/>
    </location>
</feature>
<feature type="binding site" evidence="1">
    <location>
        <position position="85"/>
    </location>
    <ligand>
        <name>Mg(2+)</name>
        <dbReference type="ChEBI" id="CHEBI:18420"/>
    </ligand>
</feature>
<feature type="binding site" evidence="1">
    <location>
        <position position="87"/>
    </location>
    <ligand>
        <name>Mg(2+)</name>
        <dbReference type="ChEBI" id="CHEBI:18420"/>
    </ligand>
</feature>
<feature type="binding site" evidence="1">
    <location>
        <position position="100"/>
    </location>
    <ligand>
        <name>Mg(2+)</name>
        <dbReference type="ChEBI" id="CHEBI:18420"/>
    </ligand>
</feature>
<feature type="binding site" evidence="1">
    <location>
        <position position="119"/>
    </location>
    <ligand>
        <name>Mg(2+)</name>
        <dbReference type="ChEBI" id="CHEBI:18420"/>
    </ligand>
</feature>
<feature type="site" description="Transition state stabilizer" evidence="1">
    <location>
        <position position="102"/>
    </location>
</feature>
<accession>B5XMJ9</accession>
<comment type="function">
    <text evidence="1">Endonuclease that resolves Holliday junction intermediates in genetic recombination. Cleaves mobile four-strand junctions by introducing symmetrical nicks in paired strands. Promotes annealing of linear ssDNA with homologous dsDNA. Required for DNA repair, homologous recombination and chromosome segregation.</text>
</comment>
<comment type="catalytic activity">
    <reaction evidence="1">
        <text>Endonucleolytic cleavage at a junction such as a reciprocal single-stranded crossover between two homologous DNA duplexes (Holliday junction).</text>
        <dbReference type="EC" id="3.1.21.10"/>
    </reaction>
</comment>
<comment type="cofactor">
    <cofactor evidence="1">
        <name>Mg(2+)</name>
        <dbReference type="ChEBI" id="CHEBI:18420"/>
    </cofactor>
    <text evidence="1">Binds 1 Mg(2+) ion per subunit.</text>
</comment>
<comment type="subcellular location">
    <subcellularLocation>
        <location evidence="1">Cytoplasm</location>
    </subcellularLocation>
</comment>
<comment type="similarity">
    <text evidence="1">Belongs to the RecU family.</text>
</comment>
<organism>
    <name type="scientific">Streptococcus pyogenes serotype M49 (strain NZ131)</name>
    <dbReference type="NCBI Taxonomy" id="471876"/>
    <lineage>
        <taxon>Bacteria</taxon>
        <taxon>Bacillati</taxon>
        <taxon>Bacillota</taxon>
        <taxon>Bacilli</taxon>
        <taxon>Lactobacillales</taxon>
        <taxon>Streptococcaceae</taxon>
        <taxon>Streptococcus</taxon>
    </lineage>
</organism>
<sequence>MVNYPHNLIRQKVSSVQKQTKQNKVDFANRGMSFEAAINATNDYYLSRQIAVIHKKPTPVQIVKVDYPKRSRAKIVEAYFRQASTTDYCGVYKGHYVDFEAKETRQKTAMPMKNFHLHQIEHMACVLHQKGICFVLLHFSTLKETYYLPAQALISFYQIDNGSKSMPIDYIRKNGFKVAFGAFPQVPYLNIIEQNFLGGDYN</sequence>
<gene>
    <name evidence="1" type="primary">recU</name>
    <name type="ordered locus">Spy49_1278</name>
</gene>
<dbReference type="EC" id="3.1.21.10" evidence="1"/>
<dbReference type="EMBL" id="CP000829">
    <property type="protein sequence ID" value="ACI61561.1"/>
    <property type="molecule type" value="Genomic_DNA"/>
</dbReference>
<dbReference type="SMR" id="B5XMJ9"/>
<dbReference type="KEGG" id="soz:Spy49_1278"/>
<dbReference type="HOGENOM" id="CLU_096340_0_0_9"/>
<dbReference type="Proteomes" id="UP000001039">
    <property type="component" value="Chromosome"/>
</dbReference>
<dbReference type="GO" id="GO:0005737">
    <property type="term" value="C:cytoplasm"/>
    <property type="evidence" value="ECO:0007669"/>
    <property type="project" value="UniProtKB-SubCell"/>
</dbReference>
<dbReference type="GO" id="GO:0004519">
    <property type="term" value="F:endonuclease activity"/>
    <property type="evidence" value="ECO:0007669"/>
    <property type="project" value="UniProtKB-UniRule"/>
</dbReference>
<dbReference type="GO" id="GO:0000287">
    <property type="term" value="F:magnesium ion binding"/>
    <property type="evidence" value="ECO:0007669"/>
    <property type="project" value="UniProtKB-UniRule"/>
</dbReference>
<dbReference type="GO" id="GO:0003676">
    <property type="term" value="F:nucleic acid binding"/>
    <property type="evidence" value="ECO:0007669"/>
    <property type="project" value="InterPro"/>
</dbReference>
<dbReference type="GO" id="GO:0007059">
    <property type="term" value="P:chromosome segregation"/>
    <property type="evidence" value="ECO:0007669"/>
    <property type="project" value="UniProtKB-UniRule"/>
</dbReference>
<dbReference type="GO" id="GO:0006310">
    <property type="term" value="P:DNA recombination"/>
    <property type="evidence" value="ECO:0007669"/>
    <property type="project" value="UniProtKB-UniRule"/>
</dbReference>
<dbReference type="GO" id="GO:0006281">
    <property type="term" value="P:DNA repair"/>
    <property type="evidence" value="ECO:0007669"/>
    <property type="project" value="UniProtKB-UniRule"/>
</dbReference>
<dbReference type="CDD" id="cd22354">
    <property type="entry name" value="RecU-like"/>
    <property type="match status" value="1"/>
</dbReference>
<dbReference type="Gene3D" id="3.40.1350.10">
    <property type="match status" value="1"/>
</dbReference>
<dbReference type="HAMAP" id="MF_00130">
    <property type="entry name" value="RecU"/>
    <property type="match status" value="1"/>
</dbReference>
<dbReference type="InterPro" id="IPR004612">
    <property type="entry name" value="Resolv_RecU"/>
</dbReference>
<dbReference type="InterPro" id="IPR011335">
    <property type="entry name" value="Restrct_endonuc-II-like"/>
</dbReference>
<dbReference type="InterPro" id="IPR011856">
    <property type="entry name" value="tRNA_endonuc-like_dom_sf"/>
</dbReference>
<dbReference type="NCBIfam" id="NF002580">
    <property type="entry name" value="PRK02234.1-1"/>
    <property type="match status" value="1"/>
</dbReference>
<dbReference type="NCBIfam" id="NF002584">
    <property type="entry name" value="PRK02234.1-5"/>
    <property type="match status" value="1"/>
</dbReference>
<dbReference type="NCBIfam" id="TIGR00648">
    <property type="entry name" value="recU"/>
    <property type="match status" value="1"/>
</dbReference>
<dbReference type="Pfam" id="PF03838">
    <property type="entry name" value="RecU"/>
    <property type="match status" value="1"/>
</dbReference>
<dbReference type="PIRSF" id="PIRSF037785">
    <property type="entry name" value="RecU"/>
    <property type="match status" value="1"/>
</dbReference>
<dbReference type="SUPFAM" id="SSF52980">
    <property type="entry name" value="Restriction endonuclease-like"/>
    <property type="match status" value="1"/>
</dbReference>
<protein>
    <recommendedName>
        <fullName evidence="1">Holliday junction resolvase RecU</fullName>
        <ecNumber evidence="1">3.1.21.10</ecNumber>
    </recommendedName>
    <alternativeName>
        <fullName evidence="1">Recombination protein U homolog</fullName>
    </alternativeName>
</protein>
<reference key="1">
    <citation type="journal article" date="2008" name="J. Bacteriol.">
        <title>Genome sequence of a nephritogenic and highly transformable M49 strain of Streptococcus pyogenes.</title>
        <authorList>
            <person name="McShan W.M."/>
            <person name="Ferretti J.J."/>
            <person name="Karasawa T."/>
            <person name="Suvorov A.N."/>
            <person name="Lin S."/>
            <person name="Qin B."/>
            <person name="Jia H."/>
            <person name="Kenton S."/>
            <person name="Najar F."/>
            <person name="Wu H."/>
            <person name="Scott J."/>
            <person name="Roe B.A."/>
            <person name="Savic D.J."/>
        </authorList>
    </citation>
    <scope>NUCLEOTIDE SEQUENCE [LARGE SCALE GENOMIC DNA]</scope>
    <source>
        <strain>NZ131</strain>
    </source>
</reference>
<keyword id="KW-0963">Cytoplasm</keyword>
<keyword id="KW-0227">DNA damage</keyword>
<keyword id="KW-0233">DNA recombination</keyword>
<keyword id="KW-0234">DNA repair</keyword>
<keyword id="KW-0255">Endonuclease</keyword>
<keyword id="KW-0378">Hydrolase</keyword>
<keyword id="KW-0460">Magnesium</keyword>
<keyword id="KW-0479">Metal-binding</keyword>
<keyword id="KW-0540">Nuclease</keyword>
<evidence type="ECO:0000255" key="1">
    <source>
        <dbReference type="HAMAP-Rule" id="MF_00130"/>
    </source>
</evidence>